<keyword id="KW-0204">Cytolysis</keyword>
<keyword id="KW-0903">Direct protein sequencing</keyword>
<keyword id="KW-1015">Disulfide bond</keyword>
<keyword id="KW-0325">Glycoprotein</keyword>
<keyword id="KW-0378">Hydrolase</keyword>
<keyword id="KW-0458">Lysosome</keyword>
<keyword id="KW-0645">Protease</keyword>
<keyword id="KW-1185">Reference proteome</keyword>
<keyword id="KW-0720">Serine protease</keyword>
<keyword id="KW-0732">Signal</keyword>
<keyword id="KW-0865">Zymogen</keyword>
<protein>
    <recommendedName>
        <fullName>Granzyme F</fullName>
        <ecNumber>3.4.21.-</ecNumber>
    </recommendedName>
    <alternativeName>
        <fullName>C134</fullName>
    </alternativeName>
    <alternativeName>
        <fullName>CTL serine protease 3</fullName>
    </alternativeName>
    <alternativeName>
        <fullName>Cytotoxic cell protease 4</fullName>
        <shortName>CCP4</shortName>
    </alternativeName>
    <alternativeName>
        <fullName>Cytotoxic serine protease 3</fullName>
    </alternativeName>
    <alternativeName>
        <fullName>MCSP3</fullName>
    </alternativeName>
</protein>
<evidence type="ECO:0000250" key="1"/>
<evidence type="ECO:0000255" key="2"/>
<evidence type="ECO:0000255" key="3">
    <source>
        <dbReference type="PROSITE-ProRule" id="PRU00274"/>
    </source>
</evidence>
<evidence type="ECO:0000269" key="4">
    <source>
    </source>
</evidence>
<evidence type="ECO:0000269" key="5">
    <source>
    </source>
</evidence>
<gene>
    <name type="primary">Gzmf</name>
    <name type="synonym">Ccp4</name>
    <name type="synonym">Ctla-7</name>
    <name type="synonym">Ctla7</name>
</gene>
<reference key="1">
    <citation type="journal article" date="1991" name="J. Immunol.">
        <title>Genomic organization and subchromosomal in situ localization of the murine granzyme F, a serine protease expressed in CD8+ T cells.</title>
        <authorList>
            <person name="Jenne D.E."/>
            <person name="Zimmer M."/>
            <person name="Garcia-Sanz J.A."/>
            <person name="Tschopp J.F."/>
            <person name="Lichter P."/>
        </authorList>
    </citation>
    <scope>NUCLEOTIDE SEQUENCE [GENOMIC DNA]</scope>
    <source>
        <tissue>Spleen</tissue>
    </source>
</reference>
<reference key="2">
    <citation type="journal article" date="1991" name="J. Mol. Biol.">
        <title>Structure and evolution of the cytotoxic cell proteinase genes CCP3, CCP4 and CCP5.</title>
        <authorList>
            <person name="Prendergast J.A."/>
            <person name="Pinkoski M."/>
            <person name="Wolfenden A."/>
            <person name="Bleackley R.C."/>
        </authorList>
    </citation>
    <scope>NUCLEOTIDE SEQUENCE [GENOMIC DNA]</scope>
</reference>
<reference key="3">
    <citation type="journal article" date="1988" name="FEBS Lett.">
        <title>Isolation of two cDNA sequences which encode cytotoxic cell proteases.</title>
        <authorList>
            <person name="Bleackley R.C."/>
            <person name="Duggan B."/>
            <person name="Ehrman N."/>
            <person name="Lobe C.G."/>
        </authorList>
    </citation>
    <scope>NUCLEOTIDE SEQUENCE [MRNA]</scope>
</reference>
<reference key="4">
    <citation type="journal article" date="1988" name="Proc. Natl. Acad. Sci. U.S.A.">
        <title>Identification and sequencing of cDNA clones encoding the granule-associated serine proteases granzymes D, E, and F of cytolytic T lymphocytes.</title>
        <authorList>
            <person name="Jenne D.E."/>
            <person name="Rey C."/>
            <person name="Haefliger J.-A."/>
            <person name="Qiao B.-Y."/>
            <person name="Groscurth P."/>
            <person name="Tschopp J."/>
        </authorList>
    </citation>
    <scope>NUCLEOTIDE SEQUENCE [MRNA]</scope>
</reference>
<reference key="5">
    <citation type="journal article" date="1988" name="J. Exp. Med.">
        <title>Isolation and sequence analysis of serine protease cDNAs from mouse cytolytic T lymphocytes.</title>
        <authorList>
            <person name="Kwon B.S."/>
            <person name="Kestler D."/>
            <person name="Lee E."/>
            <person name="Wakulchik M."/>
            <person name="Young J.D.-E."/>
        </authorList>
    </citation>
    <scope>NUCLEOTIDE SEQUENCE</scope>
    <source>
        <tissue>Cytotoxic T-cell</tissue>
    </source>
</reference>
<reference key="6">
    <citation type="journal article" date="1987" name="Cell">
        <title>A family of serine esterases in lytic granules of cytolytic T lymphocytes.</title>
        <authorList>
            <person name="Masson D."/>
            <person name="Tschopp J."/>
        </authorList>
    </citation>
    <scope>PROTEIN SEQUENCE OF 21-40</scope>
</reference>
<reference key="7">
    <citation type="journal article" date="1990" name="Protein Expr. Purif.">
        <title>Purification of a membrane-associated serine esterase from murine cytotoxic T lymphocytes by a single reverse-phase column.</title>
        <authorList>
            <person name="Jiang S."/>
            <person name="Hasselkus-Light C.S."/>
            <person name="Ojcius D.M."/>
            <person name="Young J.D.-E."/>
        </authorList>
    </citation>
    <scope>PROTEIN SEQUENCE OF 21-45</scope>
</reference>
<sequence length="248" mass="27642">MPPILILLTLLLPLRAGAEEIIGGHEVKPHSRPYMARVRFVKDNGKRHSCGGFLVQDYFVLTAAHCTGSSMRVILGAHNIRAKEETQQIIPVAKAIPHPAYDDKDNTSDIMLLKLESKAKRTKAVRPLKLPRPNARVKPGHVCSVAGWGRTSINATQRSSCLREAQLIIQKDKECKKYFYKYFKTMQICAGDPKKIQSTYSGDSGGPLVCNNKAYGVLTYGLNRTIGPGVFTKVVHYLPWISRNMKLL</sequence>
<feature type="signal peptide">
    <location>
        <begin position="1"/>
        <end position="18"/>
    </location>
</feature>
<feature type="propeptide" id="PRO_0000027409" evidence="4 5">
    <location>
        <begin position="19"/>
        <end position="20"/>
    </location>
</feature>
<feature type="chain" id="PRO_0000027410" description="Granzyme F">
    <location>
        <begin position="21"/>
        <end position="248"/>
    </location>
</feature>
<feature type="domain" description="Peptidase S1" evidence="3">
    <location>
        <begin position="21"/>
        <end position="246"/>
    </location>
</feature>
<feature type="active site" description="Charge relay system" evidence="1">
    <location>
        <position position="65"/>
    </location>
</feature>
<feature type="active site" description="Charge relay system" evidence="1">
    <location>
        <position position="109"/>
    </location>
</feature>
<feature type="active site" description="Charge relay system" evidence="1">
    <location>
        <position position="204"/>
    </location>
</feature>
<feature type="glycosylation site" description="N-linked (GlcNAc...) asparagine" evidence="2">
    <location>
        <position position="106"/>
    </location>
</feature>
<feature type="glycosylation site" description="N-linked (GlcNAc...) asparagine" evidence="2">
    <location>
        <position position="154"/>
    </location>
</feature>
<feature type="glycosylation site" description="N-linked (GlcNAc...) asparagine" evidence="2">
    <location>
        <position position="223"/>
    </location>
</feature>
<feature type="disulfide bond" evidence="3">
    <location>
        <begin position="50"/>
        <end position="66"/>
    </location>
</feature>
<feature type="disulfide bond" evidence="3">
    <location>
        <begin position="143"/>
        <end position="210"/>
    </location>
</feature>
<feature type="disulfide bond" evidence="3">
    <location>
        <begin position="175"/>
        <end position="189"/>
    </location>
</feature>
<proteinExistence type="evidence at protein level"/>
<name>GRAF_MOUSE</name>
<comment type="function">
    <text>This enzyme is probably necessary for target cell lysis in cell-mediated immune responses.</text>
</comment>
<comment type="subcellular location">
    <subcellularLocation>
        <location>Cytolytic granule</location>
    </subcellularLocation>
</comment>
<comment type="similarity">
    <text evidence="3">Belongs to the peptidase S1 family. Granzyme subfamily.</text>
</comment>
<dbReference type="EC" id="3.4.21.-"/>
<dbReference type="EMBL" id="M36902">
    <property type="protein sequence ID" value="AAA37488.1"/>
    <property type="molecule type" value="mRNA"/>
</dbReference>
<dbReference type="EMBL" id="X56989">
    <property type="protein sequence ID" value="CAA40307.1"/>
    <property type="molecule type" value="Genomic_DNA"/>
</dbReference>
<dbReference type="EMBL" id="M96930">
    <property type="protein sequence ID" value="AAA37741.1"/>
    <property type="molecule type" value="Genomic_DNA"/>
</dbReference>
<dbReference type="EMBL" id="J03257">
    <property type="protein sequence ID" value="AAA37738.1"/>
    <property type="molecule type" value="mRNA"/>
</dbReference>
<dbReference type="EMBL" id="X12823">
    <property type="protein sequence ID" value="CAA31310.1"/>
    <property type="molecule type" value="mRNA"/>
</dbReference>
<dbReference type="EMBL" id="X14094">
    <property type="protein sequence ID" value="CAA32256.1"/>
    <property type="molecule type" value="mRNA"/>
</dbReference>
<dbReference type="CCDS" id="CCDS36936.1"/>
<dbReference type="PIR" id="S24940">
    <property type="entry name" value="S01007"/>
</dbReference>
<dbReference type="RefSeq" id="NP_034504.1">
    <property type="nucleotide sequence ID" value="NM_010374.3"/>
</dbReference>
<dbReference type="SMR" id="P08883"/>
<dbReference type="BioGRID" id="200139">
    <property type="interactions" value="1"/>
</dbReference>
<dbReference type="FunCoup" id="P08883">
    <property type="interactions" value="445"/>
</dbReference>
<dbReference type="STRING" id="10090.ENSMUSP00000022757"/>
<dbReference type="MEROPS" id="S01.401"/>
<dbReference type="GlyCosmos" id="P08883">
    <property type="glycosylation" value="3 sites, No reported glycans"/>
</dbReference>
<dbReference type="GlyGen" id="P08883">
    <property type="glycosylation" value="3 sites"/>
</dbReference>
<dbReference type="iPTMnet" id="P08883"/>
<dbReference type="PhosphoSitePlus" id="P08883"/>
<dbReference type="PaxDb" id="10090-ENSMUSP00000022757"/>
<dbReference type="PeptideAtlas" id="P08883"/>
<dbReference type="DNASU" id="14943"/>
<dbReference type="Ensembl" id="ENSMUST00000022757.5">
    <property type="protein sequence ID" value="ENSMUSP00000022757.4"/>
    <property type="gene ID" value="ENSMUSG00000015441.5"/>
</dbReference>
<dbReference type="GeneID" id="14943"/>
<dbReference type="KEGG" id="mmu:14943"/>
<dbReference type="UCSC" id="uc007ubs.1">
    <property type="organism name" value="mouse"/>
</dbReference>
<dbReference type="AGR" id="MGI:109254"/>
<dbReference type="CTD" id="14943"/>
<dbReference type="MGI" id="MGI:109254">
    <property type="gene designation" value="Gzmf"/>
</dbReference>
<dbReference type="VEuPathDB" id="HostDB:ENSMUSG00000015441"/>
<dbReference type="eggNOG" id="KOG3627">
    <property type="taxonomic scope" value="Eukaryota"/>
</dbReference>
<dbReference type="GeneTree" id="ENSGT01030000234551"/>
<dbReference type="HOGENOM" id="CLU_006842_1_0_1"/>
<dbReference type="InParanoid" id="P08883"/>
<dbReference type="OMA" id="AYNIREQ"/>
<dbReference type="OrthoDB" id="5565075at2759"/>
<dbReference type="PhylomeDB" id="P08883"/>
<dbReference type="TreeFam" id="TF333630"/>
<dbReference type="BioGRID-ORCS" id="14943">
    <property type="hits" value="3 hits in 78 CRISPR screens"/>
</dbReference>
<dbReference type="ChiTaRS" id="Gzmf">
    <property type="organism name" value="mouse"/>
</dbReference>
<dbReference type="PRO" id="PR:P08883"/>
<dbReference type="Proteomes" id="UP000000589">
    <property type="component" value="Chromosome 14"/>
</dbReference>
<dbReference type="RNAct" id="P08883">
    <property type="molecule type" value="protein"/>
</dbReference>
<dbReference type="Bgee" id="ENSMUSG00000015441">
    <property type="expression patterns" value="Expressed in gastrula and 11 other cell types or tissues"/>
</dbReference>
<dbReference type="ExpressionAtlas" id="P08883">
    <property type="expression patterns" value="baseline and differential"/>
</dbReference>
<dbReference type="GO" id="GO:0044194">
    <property type="term" value="C:cytolytic granule"/>
    <property type="evidence" value="ECO:0007669"/>
    <property type="project" value="UniProtKB-SubCell"/>
</dbReference>
<dbReference type="GO" id="GO:0004252">
    <property type="term" value="F:serine-type endopeptidase activity"/>
    <property type="evidence" value="ECO:0007669"/>
    <property type="project" value="InterPro"/>
</dbReference>
<dbReference type="GO" id="GO:0031640">
    <property type="term" value="P:killing of cells of another organism"/>
    <property type="evidence" value="ECO:0007669"/>
    <property type="project" value="UniProtKB-KW"/>
</dbReference>
<dbReference type="GO" id="GO:0006508">
    <property type="term" value="P:proteolysis"/>
    <property type="evidence" value="ECO:0007669"/>
    <property type="project" value="UniProtKB-KW"/>
</dbReference>
<dbReference type="CDD" id="cd00190">
    <property type="entry name" value="Tryp_SPc"/>
    <property type="match status" value="1"/>
</dbReference>
<dbReference type="FunFam" id="2.40.10.10:FF:000014">
    <property type="entry name" value="Complement factor D"/>
    <property type="match status" value="1"/>
</dbReference>
<dbReference type="Gene3D" id="2.40.10.10">
    <property type="entry name" value="Trypsin-like serine proteases"/>
    <property type="match status" value="2"/>
</dbReference>
<dbReference type="InterPro" id="IPR009003">
    <property type="entry name" value="Peptidase_S1_PA"/>
</dbReference>
<dbReference type="InterPro" id="IPR043504">
    <property type="entry name" value="Peptidase_S1_PA_chymotrypsin"/>
</dbReference>
<dbReference type="InterPro" id="IPR001314">
    <property type="entry name" value="Peptidase_S1A"/>
</dbReference>
<dbReference type="InterPro" id="IPR001254">
    <property type="entry name" value="Trypsin_dom"/>
</dbReference>
<dbReference type="InterPro" id="IPR018114">
    <property type="entry name" value="TRYPSIN_HIS"/>
</dbReference>
<dbReference type="InterPro" id="IPR033116">
    <property type="entry name" value="TRYPSIN_SER"/>
</dbReference>
<dbReference type="PANTHER" id="PTHR24271:SF93">
    <property type="entry name" value="GRANZYME D-RELATED"/>
    <property type="match status" value="1"/>
</dbReference>
<dbReference type="PANTHER" id="PTHR24271">
    <property type="entry name" value="KALLIKREIN-RELATED"/>
    <property type="match status" value="1"/>
</dbReference>
<dbReference type="Pfam" id="PF00089">
    <property type="entry name" value="Trypsin"/>
    <property type="match status" value="1"/>
</dbReference>
<dbReference type="PRINTS" id="PR00722">
    <property type="entry name" value="CHYMOTRYPSIN"/>
</dbReference>
<dbReference type="SMART" id="SM00020">
    <property type="entry name" value="Tryp_SPc"/>
    <property type="match status" value="1"/>
</dbReference>
<dbReference type="SUPFAM" id="SSF50494">
    <property type="entry name" value="Trypsin-like serine proteases"/>
    <property type="match status" value="1"/>
</dbReference>
<dbReference type="PROSITE" id="PS50240">
    <property type="entry name" value="TRYPSIN_DOM"/>
    <property type="match status" value="1"/>
</dbReference>
<dbReference type="PROSITE" id="PS00134">
    <property type="entry name" value="TRYPSIN_HIS"/>
    <property type="match status" value="1"/>
</dbReference>
<dbReference type="PROSITE" id="PS00135">
    <property type="entry name" value="TRYPSIN_SER"/>
    <property type="match status" value="1"/>
</dbReference>
<organism>
    <name type="scientific">Mus musculus</name>
    <name type="common">Mouse</name>
    <dbReference type="NCBI Taxonomy" id="10090"/>
    <lineage>
        <taxon>Eukaryota</taxon>
        <taxon>Metazoa</taxon>
        <taxon>Chordata</taxon>
        <taxon>Craniata</taxon>
        <taxon>Vertebrata</taxon>
        <taxon>Euteleostomi</taxon>
        <taxon>Mammalia</taxon>
        <taxon>Eutheria</taxon>
        <taxon>Euarchontoglires</taxon>
        <taxon>Glires</taxon>
        <taxon>Rodentia</taxon>
        <taxon>Myomorpha</taxon>
        <taxon>Muroidea</taxon>
        <taxon>Muridae</taxon>
        <taxon>Murinae</taxon>
        <taxon>Mus</taxon>
        <taxon>Mus</taxon>
    </lineage>
</organism>
<accession>P08883</accession>